<protein>
    <recommendedName>
        <fullName evidence="1">Ribosomal RNA small subunit methyltransferase J</fullName>
        <ecNumber evidence="1">2.1.1.242</ecNumber>
    </recommendedName>
    <alternativeName>
        <fullName evidence="1">16S rRNA m2G1516 methyltransferase</fullName>
    </alternativeName>
    <alternativeName>
        <fullName evidence="1">rRNA (guanine-N(2)-)-methyltransferase</fullName>
    </alternativeName>
</protein>
<comment type="function">
    <text evidence="1">Specifically methylates the guanosine in position 1516 of 16S rRNA.</text>
</comment>
<comment type="catalytic activity">
    <reaction evidence="1">
        <text>guanosine(1516) in 16S rRNA + S-adenosyl-L-methionine = N(2)-methylguanosine(1516) in 16S rRNA + S-adenosyl-L-homocysteine + H(+)</text>
        <dbReference type="Rhea" id="RHEA:43220"/>
        <dbReference type="Rhea" id="RHEA-COMP:10412"/>
        <dbReference type="Rhea" id="RHEA-COMP:10413"/>
        <dbReference type="ChEBI" id="CHEBI:15378"/>
        <dbReference type="ChEBI" id="CHEBI:57856"/>
        <dbReference type="ChEBI" id="CHEBI:59789"/>
        <dbReference type="ChEBI" id="CHEBI:74269"/>
        <dbReference type="ChEBI" id="CHEBI:74481"/>
        <dbReference type="EC" id="2.1.1.242"/>
    </reaction>
</comment>
<comment type="subcellular location">
    <subcellularLocation>
        <location evidence="1">Cytoplasm</location>
    </subcellularLocation>
</comment>
<comment type="similarity">
    <text evidence="1">Belongs to the methyltransferase superfamily. RsmJ family.</text>
</comment>
<sequence>MKICLIDETGTGDGALSVLAARWGLEHDEDNLMALVLTPEHLELRKRDEPKLGGIFVDFVGGAMAHRRKFGGGRGEAVAKAVGIKGDYLPDVVDATAGLGRDAFVLASVGCRVRMLERNPVVAALLDDGLARGYADAEIGGWLQERLQLIHASSLTALTDITPRPQVVYLDPMFPHKQKSALVKKEMRVFQSLVGPDLDADGLLEPARLLATKRVVVKRPDYAPPLANVATPNAVVTKGHRFDIYAGTPV</sequence>
<feature type="chain" id="PRO_1000198491" description="Ribosomal RNA small subunit methyltransferase J">
    <location>
        <begin position="1"/>
        <end position="250"/>
    </location>
</feature>
<feature type="binding site" evidence="1">
    <location>
        <begin position="101"/>
        <end position="102"/>
    </location>
    <ligand>
        <name>S-adenosyl-L-methionine</name>
        <dbReference type="ChEBI" id="CHEBI:59789"/>
    </ligand>
</feature>
<feature type="binding site" evidence="1">
    <location>
        <begin position="117"/>
        <end position="118"/>
    </location>
    <ligand>
        <name>S-adenosyl-L-methionine</name>
        <dbReference type="ChEBI" id="CHEBI:59789"/>
    </ligand>
</feature>
<feature type="binding site" evidence="1">
    <location>
        <begin position="153"/>
        <end position="154"/>
    </location>
    <ligand>
        <name>S-adenosyl-L-methionine</name>
        <dbReference type="ChEBI" id="CHEBI:59789"/>
    </ligand>
</feature>
<feature type="binding site" evidence="1">
    <location>
        <position position="171"/>
    </location>
    <ligand>
        <name>S-adenosyl-L-methionine</name>
        <dbReference type="ChEBI" id="CHEBI:59789"/>
    </ligand>
</feature>
<dbReference type="EC" id="2.1.1.242" evidence="1"/>
<dbReference type="EMBL" id="CP000948">
    <property type="protein sequence ID" value="ACB04550.1"/>
    <property type="molecule type" value="Genomic_DNA"/>
</dbReference>
<dbReference type="RefSeq" id="WP_000686620.1">
    <property type="nucleotide sequence ID" value="NC_010473.1"/>
</dbReference>
<dbReference type="SMR" id="B1X7V2"/>
<dbReference type="KEGG" id="ecd:ECDH10B_3673"/>
<dbReference type="HOGENOM" id="CLU_076324_0_0_6"/>
<dbReference type="GO" id="GO:0005737">
    <property type="term" value="C:cytoplasm"/>
    <property type="evidence" value="ECO:0007669"/>
    <property type="project" value="UniProtKB-SubCell"/>
</dbReference>
<dbReference type="GO" id="GO:0008990">
    <property type="term" value="F:rRNA (guanine-N2-)-methyltransferase activity"/>
    <property type="evidence" value="ECO:0007669"/>
    <property type="project" value="UniProtKB-UniRule"/>
</dbReference>
<dbReference type="CDD" id="cd02440">
    <property type="entry name" value="AdoMet_MTases"/>
    <property type="match status" value="1"/>
</dbReference>
<dbReference type="FunFam" id="3.40.1630.10:FF:000001">
    <property type="entry name" value="Ribosomal RNA small subunit methyltransferase J"/>
    <property type="match status" value="1"/>
</dbReference>
<dbReference type="FunFam" id="3.40.50.150:FF:000072">
    <property type="entry name" value="Ribosomal RNA small subunit methyltransferase J"/>
    <property type="match status" value="1"/>
</dbReference>
<dbReference type="Gene3D" id="3.40.50.150">
    <property type="entry name" value="Vaccinia Virus protein VP39"/>
    <property type="match status" value="1"/>
</dbReference>
<dbReference type="Gene3D" id="3.40.1630.10">
    <property type="entry name" value="YhiQ-like domain"/>
    <property type="match status" value="1"/>
</dbReference>
<dbReference type="HAMAP" id="MF_01523">
    <property type="entry name" value="16SrRNA_methyltr_J"/>
    <property type="match status" value="1"/>
</dbReference>
<dbReference type="InterPro" id="IPR007536">
    <property type="entry name" value="16SrRNA_methylTrfase_J"/>
</dbReference>
<dbReference type="InterPro" id="IPR029063">
    <property type="entry name" value="SAM-dependent_MTases_sf"/>
</dbReference>
<dbReference type="NCBIfam" id="NF008012">
    <property type="entry name" value="PRK10742.1"/>
    <property type="match status" value="1"/>
</dbReference>
<dbReference type="PANTHER" id="PTHR36112">
    <property type="entry name" value="RIBOSOMAL RNA SMALL SUBUNIT METHYLTRANSFERASE J"/>
    <property type="match status" value="1"/>
</dbReference>
<dbReference type="PANTHER" id="PTHR36112:SF1">
    <property type="entry name" value="RIBOSOMAL RNA SMALL SUBUNIT METHYLTRANSFERASE J"/>
    <property type="match status" value="1"/>
</dbReference>
<dbReference type="Pfam" id="PF04445">
    <property type="entry name" value="SAM_MT"/>
    <property type="match status" value="1"/>
</dbReference>
<dbReference type="SUPFAM" id="SSF53335">
    <property type="entry name" value="S-adenosyl-L-methionine-dependent methyltransferases"/>
    <property type="match status" value="1"/>
</dbReference>
<keyword id="KW-0963">Cytoplasm</keyword>
<keyword id="KW-0489">Methyltransferase</keyword>
<keyword id="KW-0698">rRNA processing</keyword>
<keyword id="KW-0949">S-adenosyl-L-methionine</keyword>
<keyword id="KW-0808">Transferase</keyword>
<name>RSMJ_ECODH</name>
<proteinExistence type="inferred from homology"/>
<accession>B1X7V2</accession>
<gene>
    <name evidence="1" type="primary">rsmJ</name>
    <name type="synonym">yhiQ</name>
    <name type="ordered locus">ECDH10B_3673</name>
</gene>
<evidence type="ECO:0000255" key="1">
    <source>
        <dbReference type="HAMAP-Rule" id="MF_01523"/>
    </source>
</evidence>
<organism>
    <name type="scientific">Escherichia coli (strain K12 / DH10B)</name>
    <dbReference type="NCBI Taxonomy" id="316385"/>
    <lineage>
        <taxon>Bacteria</taxon>
        <taxon>Pseudomonadati</taxon>
        <taxon>Pseudomonadota</taxon>
        <taxon>Gammaproteobacteria</taxon>
        <taxon>Enterobacterales</taxon>
        <taxon>Enterobacteriaceae</taxon>
        <taxon>Escherichia</taxon>
    </lineage>
</organism>
<reference key="1">
    <citation type="journal article" date="2008" name="J. Bacteriol.">
        <title>The complete genome sequence of Escherichia coli DH10B: insights into the biology of a laboratory workhorse.</title>
        <authorList>
            <person name="Durfee T."/>
            <person name="Nelson R."/>
            <person name="Baldwin S."/>
            <person name="Plunkett G. III"/>
            <person name="Burland V."/>
            <person name="Mau B."/>
            <person name="Petrosino J.F."/>
            <person name="Qin X."/>
            <person name="Muzny D.M."/>
            <person name="Ayele M."/>
            <person name="Gibbs R.A."/>
            <person name="Csorgo B."/>
            <person name="Posfai G."/>
            <person name="Weinstock G.M."/>
            <person name="Blattner F.R."/>
        </authorList>
    </citation>
    <scope>NUCLEOTIDE SEQUENCE [LARGE SCALE GENOMIC DNA]</scope>
    <source>
        <strain>K12 / DH10B</strain>
    </source>
</reference>